<comment type="similarity">
    <text evidence="1">Belongs to the SfsA family.</text>
</comment>
<gene>
    <name evidence="1" type="primary">sfsA</name>
    <name type="ordered locus">CYA_0465</name>
</gene>
<organism>
    <name type="scientific">Synechococcus sp. (strain JA-3-3Ab)</name>
    <name type="common">Cyanobacteria bacterium Yellowstone A-Prime</name>
    <dbReference type="NCBI Taxonomy" id="321327"/>
    <lineage>
        <taxon>Bacteria</taxon>
        <taxon>Bacillati</taxon>
        <taxon>Cyanobacteriota</taxon>
        <taxon>Cyanophyceae</taxon>
        <taxon>Synechococcales</taxon>
        <taxon>Synechococcaceae</taxon>
        <taxon>Synechococcus</taxon>
    </lineage>
</organism>
<feature type="chain" id="PRO_0000340156" description="Sugar fermentation stimulation protein homolog">
    <location>
        <begin position="1"/>
        <end position="239"/>
    </location>
</feature>
<sequence>MPAQEGPPPYCFSTPLRRGVLRSRYRRFFAEVELENGQPVTAHCPNTGPMTGVCQVGAPVYLSYHPDPKRKLAYTWEMIQVEGVWVGINTGLPNRLVEWGLARGWFPQLAEFSRWQREVTCGRSKIDFLLMGDSGLAYLEVKNTTWAVGSRALFPDTVTTRGQKHLEDLIEIRRQGQRALLLYWINRADCTEFAPGEERDPRYAHLFRQALQAGVEVLPYRIAVSPQGIRPLGLAKIVA</sequence>
<proteinExistence type="inferred from homology"/>
<reference key="1">
    <citation type="journal article" date="2007" name="ISME J.">
        <title>Population level functional diversity in a microbial community revealed by comparative genomic and metagenomic analyses.</title>
        <authorList>
            <person name="Bhaya D."/>
            <person name="Grossman A.R."/>
            <person name="Steunou A.-S."/>
            <person name="Khuri N."/>
            <person name="Cohan F.M."/>
            <person name="Hamamura N."/>
            <person name="Melendrez M.C."/>
            <person name="Bateson M.M."/>
            <person name="Ward D.M."/>
            <person name="Heidelberg J.F."/>
        </authorList>
    </citation>
    <scope>NUCLEOTIDE SEQUENCE [LARGE SCALE GENOMIC DNA]</scope>
    <source>
        <strain>JA-3-3Ab</strain>
    </source>
</reference>
<protein>
    <recommendedName>
        <fullName evidence="1">Sugar fermentation stimulation protein homolog</fullName>
    </recommendedName>
</protein>
<evidence type="ECO:0000255" key="1">
    <source>
        <dbReference type="HAMAP-Rule" id="MF_00095"/>
    </source>
</evidence>
<accession>Q2JX13</accession>
<dbReference type="EMBL" id="CP000239">
    <property type="protein sequence ID" value="ABC98683.1"/>
    <property type="molecule type" value="Genomic_DNA"/>
</dbReference>
<dbReference type="RefSeq" id="WP_011429372.1">
    <property type="nucleotide sequence ID" value="NC_007775.1"/>
</dbReference>
<dbReference type="SMR" id="Q2JX13"/>
<dbReference type="STRING" id="321327.CYA_0465"/>
<dbReference type="KEGG" id="cya:CYA_0465"/>
<dbReference type="eggNOG" id="COG1489">
    <property type="taxonomic scope" value="Bacteria"/>
</dbReference>
<dbReference type="HOGENOM" id="CLU_052299_2_0_3"/>
<dbReference type="OrthoDB" id="9802365at2"/>
<dbReference type="Proteomes" id="UP000008818">
    <property type="component" value="Chromosome"/>
</dbReference>
<dbReference type="GO" id="GO:0003677">
    <property type="term" value="F:DNA binding"/>
    <property type="evidence" value="ECO:0007669"/>
    <property type="project" value="InterPro"/>
</dbReference>
<dbReference type="CDD" id="cd22359">
    <property type="entry name" value="SfsA-like_bacterial"/>
    <property type="match status" value="1"/>
</dbReference>
<dbReference type="Gene3D" id="2.40.50.580">
    <property type="match status" value="1"/>
</dbReference>
<dbReference type="Gene3D" id="3.40.1350.60">
    <property type="match status" value="1"/>
</dbReference>
<dbReference type="HAMAP" id="MF_00095">
    <property type="entry name" value="SfsA"/>
    <property type="match status" value="1"/>
</dbReference>
<dbReference type="InterPro" id="IPR005224">
    <property type="entry name" value="SfsA"/>
</dbReference>
<dbReference type="InterPro" id="IPR040452">
    <property type="entry name" value="SfsA_C"/>
</dbReference>
<dbReference type="InterPro" id="IPR041465">
    <property type="entry name" value="SfsA_N"/>
</dbReference>
<dbReference type="NCBIfam" id="TIGR00230">
    <property type="entry name" value="sfsA"/>
    <property type="match status" value="1"/>
</dbReference>
<dbReference type="PANTHER" id="PTHR30545">
    <property type="entry name" value="SUGAR FERMENTATION STIMULATION PROTEIN A"/>
    <property type="match status" value="1"/>
</dbReference>
<dbReference type="PANTHER" id="PTHR30545:SF2">
    <property type="entry name" value="SUGAR FERMENTATION STIMULATION PROTEIN A"/>
    <property type="match status" value="1"/>
</dbReference>
<dbReference type="Pfam" id="PF03749">
    <property type="entry name" value="SfsA"/>
    <property type="match status" value="1"/>
</dbReference>
<dbReference type="Pfam" id="PF17746">
    <property type="entry name" value="SfsA_N"/>
    <property type="match status" value="1"/>
</dbReference>
<name>SFSA_SYNJA</name>